<feature type="chain" id="PRO_0000197094" description="Pre-mRNA-splicing factor CEF1">
    <location>
        <begin position="1"/>
        <end position="477"/>
    </location>
</feature>
<feature type="domain" description="HTH myb-type" evidence="2">
    <location>
        <begin position="1"/>
        <end position="58"/>
    </location>
</feature>
<feature type="domain" description="Myb-like">
    <location>
        <begin position="59"/>
        <end position="104"/>
    </location>
</feature>
<feature type="DNA-binding region" description="H-T-H motif" evidence="2">
    <location>
        <begin position="33"/>
        <end position="56"/>
    </location>
</feature>
<feature type="region of interest" description="Disordered" evidence="3">
    <location>
        <begin position="233"/>
        <end position="262"/>
    </location>
</feature>
<reference key="1">
    <citation type="journal article" date="2004" name="Science">
        <title>The Ashbya gossypii genome as a tool for mapping the ancient Saccharomyces cerevisiae genome.</title>
        <authorList>
            <person name="Dietrich F.S."/>
            <person name="Voegeli S."/>
            <person name="Brachat S."/>
            <person name="Lerch A."/>
            <person name="Gates K."/>
            <person name="Steiner S."/>
            <person name="Mohr C."/>
            <person name="Poehlmann R."/>
            <person name="Luedi P."/>
            <person name="Choi S."/>
            <person name="Wing R.A."/>
            <person name="Flavier A."/>
            <person name="Gaffney T.D."/>
            <person name="Philippsen P."/>
        </authorList>
    </citation>
    <scope>NUCLEOTIDE SEQUENCE [LARGE SCALE GENOMIC DNA]</scope>
    <source>
        <strain>ATCC 10895 / CBS 109.51 / FGSC 9923 / NRRL Y-1056</strain>
    </source>
</reference>
<reference key="2">
    <citation type="journal article" date="2013" name="G3 (Bethesda)">
        <title>Genomes of Ashbya fungi isolated from insects reveal four mating-type loci, numerous translocations, lack of transposons, and distinct gene duplications.</title>
        <authorList>
            <person name="Dietrich F.S."/>
            <person name="Voegeli S."/>
            <person name="Kuo S."/>
            <person name="Philippsen P."/>
        </authorList>
    </citation>
    <scope>GENOME REANNOTATION</scope>
    <source>
        <strain>ATCC 10895 / CBS 109.51 / FGSC 9923 / NRRL Y-1056</strain>
    </source>
</reference>
<comment type="function">
    <text evidence="1">Involved in mRNA splicing and cell cycle control.</text>
</comment>
<comment type="subunit">
    <text evidence="1">Associated with the spliceosome.</text>
</comment>
<comment type="subcellular location">
    <subcellularLocation>
        <location evidence="1">Cytoplasm</location>
    </subcellularLocation>
    <subcellularLocation>
        <location evidence="2">Nucleus</location>
    </subcellularLocation>
</comment>
<comment type="similarity">
    <text evidence="4">Belongs to the CEF1 family.</text>
</comment>
<protein>
    <recommendedName>
        <fullName>Pre-mRNA-splicing factor CEF1</fullName>
    </recommendedName>
</protein>
<accession>Q756C3</accession>
<keyword id="KW-0963">Cytoplasm</keyword>
<keyword id="KW-0238">DNA-binding</keyword>
<keyword id="KW-0507">mRNA processing</keyword>
<keyword id="KW-0508">mRNA splicing</keyword>
<keyword id="KW-0539">Nucleus</keyword>
<keyword id="KW-1185">Reference proteome</keyword>
<keyword id="KW-0677">Repeat</keyword>
<keyword id="KW-0747">Spliceosome</keyword>
<proteinExistence type="inferred from homology"/>
<gene>
    <name type="primary">CEF1</name>
    <name type="ordered locus">AER344W</name>
</gene>
<evidence type="ECO:0000250" key="1"/>
<evidence type="ECO:0000255" key="2">
    <source>
        <dbReference type="PROSITE-ProRule" id="PRU00625"/>
    </source>
</evidence>
<evidence type="ECO:0000256" key="3">
    <source>
        <dbReference type="SAM" id="MobiDB-lite"/>
    </source>
</evidence>
<evidence type="ECO:0000305" key="4"/>
<name>CEF1_EREGS</name>
<dbReference type="EMBL" id="AE016818">
    <property type="protein sequence ID" value="AAS53024.1"/>
    <property type="molecule type" value="Genomic_DNA"/>
</dbReference>
<dbReference type="RefSeq" id="NP_985200.1">
    <property type="nucleotide sequence ID" value="NM_210554.1"/>
</dbReference>
<dbReference type="SMR" id="Q756C3"/>
<dbReference type="STRING" id="284811.Q756C3"/>
<dbReference type="EnsemblFungi" id="AAS53024">
    <property type="protein sequence ID" value="AAS53024"/>
    <property type="gene ID" value="AGOS_AER344W"/>
</dbReference>
<dbReference type="GeneID" id="4621414"/>
<dbReference type="KEGG" id="ago:AGOS_AER344W"/>
<dbReference type="eggNOG" id="KOG0050">
    <property type="taxonomic scope" value="Eukaryota"/>
</dbReference>
<dbReference type="HOGENOM" id="CLU_572333_0_0_1"/>
<dbReference type="InParanoid" id="Q756C3"/>
<dbReference type="OMA" id="QCELPRL"/>
<dbReference type="OrthoDB" id="1410009at2759"/>
<dbReference type="Proteomes" id="UP000000591">
    <property type="component" value="Chromosome V"/>
</dbReference>
<dbReference type="GO" id="GO:0005737">
    <property type="term" value="C:cytoplasm"/>
    <property type="evidence" value="ECO:0007669"/>
    <property type="project" value="UniProtKB-SubCell"/>
</dbReference>
<dbReference type="GO" id="GO:0000974">
    <property type="term" value="C:Prp19 complex"/>
    <property type="evidence" value="ECO:0007669"/>
    <property type="project" value="InterPro"/>
</dbReference>
<dbReference type="GO" id="GO:0005681">
    <property type="term" value="C:spliceosomal complex"/>
    <property type="evidence" value="ECO:0007669"/>
    <property type="project" value="UniProtKB-KW"/>
</dbReference>
<dbReference type="GO" id="GO:0003677">
    <property type="term" value="F:DNA binding"/>
    <property type="evidence" value="ECO:0007669"/>
    <property type="project" value="UniProtKB-KW"/>
</dbReference>
<dbReference type="GO" id="GO:0000398">
    <property type="term" value="P:mRNA splicing, via spliceosome"/>
    <property type="evidence" value="ECO:0007669"/>
    <property type="project" value="InterPro"/>
</dbReference>
<dbReference type="CDD" id="cd00167">
    <property type="entry name" value="SANT"/>
    <property type="match status" value="1"/>
</dbReference>
<dbReference type="Gene3D" id="1.10.10.60">
    <property type="entry name" value="Homeodomain-like"/>
    <property type="match status" value="1"/>
</dbReference>
<dbReference type="InterPro" id="IPR047242">
    <property type="entry name" value="CDC5L/Cef1"/>
</dbReference>
<dbReference type="InterPro" id="IPR009057">
    <property type="entry name" value="Homeodomain-like_sf"/>
</dbReference>
<dbReference type="InterPro" id="IPR017930">
    <property type="entry name" value="Myb_dom"/>
</dbReference>
<dbReference type="InterPro" id="IPR001005">
    <property type="entry name" value="SANT/Myb"/>
</dbReference>
<dbReference type="PANTHER" id="PTHR45885">
    <property type="entry name" value="CELL DIVISION CYCLE 5-LIKE PROTEIN"/>
    <property type="match status" value="1"/>
</dbReference>
<dbReference type="PANTHER" id="PTHR45885:SF1">
    <property type="entry name" value="CELL DIVISION CYCLE 5-LIKE PROTEIN"/>
    <property type="match status" value="1"/>
</dbReference>
<dbReference type="Pfam" id="PF00249">
    <property type="entry name" value="Myb_DNA-binding"/>
    <property type="match status" value="1"/>
</dbReference>
<dbReference type="SMART" id="SM00717">
    <property type="entry name" value="SANT"/>
    <property type="match status" value="2"/>
</dbReference>
<dbReference type="SUPFAM" id="SSF46689">
    <property type="entry name" value="Homeodomain-like"/>
    <property type="match status" value="1"/>
</dbReference>
<dbReference type="PROSITE" id="PS51294">
    <property type="entry name" value="HTH_MYB"/>
    <property type="match status" value="1"/>
</dbReference>
<dbReference type="PROSITE" id="PS50090">
    <property type="entry name" value="MYB_LIKE"/>
    <property type="match status" value="1"/>
</dbReference>
<sequence>MPAVPIYVKGGVWSTVEDEILRAAVQRYGTHAWNKVASLLPRKSGKQCRARWEESVRPTRQGAWTAAEDATLAALARGGPQWRSVGAALGRPAAACAARWAELTGDQAVAGPAAGERIPGAEGLPAVPEEDEREMVAEARARLASTQGKKAARRARERQVEESRRVARLQKRRALLQAGVNSALPLPRAVRGQLDPNADVLYELAPAEGVFETANEAARDRAAREAYERQIEARGKRTARKQSRAPARAPATEQPALQVRRAIPRPPLELPVPEALLKNSAAPTAAVRRALARLWQGLPAAKNDFDVAPESEDEQPSGSADAAVQSTDMEVLLPWEPPLRQDLPPPPPPPPGLLAEHYRALAAAAAGGPACYDTPDVLRQREAIERALAAEPSPAMLHPQCELPRLPSLDALRAAAQPRPQRRLAAHAATDAGSRLLAYELLPDLATKQREYYVRYTAYELERTAVATRVRRLTAGR</sequence>
<organism>
    <name type="scientific">Eremothecium gossypii (strain ATCC 10895 / CBS 109.51 / FGSC 9923 / NRRL Y-1056)</name>
    <name type="common">Yeast</name>
    <name type="synonym">Ashbya gossypii</name>
    <dbReference type="NCBI Taxonomy" id="284811"/>
    <lineage>
        <taxon>Eukaryota</taxon>
        <taxon>Fungi</taxon>
        <taxon>Dikarya</taxon>
        <taxon>Ascomycota</taxon>
        <taxon>Saccharomycotina</taxon>
        <taxon>Saccharomycetes</taxon>
        <taxon>Saccharomycetales</taxon>
        <taxon>Saccharomycetaceae</taxon>
        <taxon>Eremothecium</taxon>
    </lineage>
</organism>